<keyword id="KW-1003">Cell membrane</keyword>
<keyword id="KW-0472">Membrane</keyword>
<keyword id="KW-1185">Reference proteome</keyword>
<keyword id="KW-0812">Transmembrane</keyword>
<keyword id="KW-1133">Transmembrane helix</keyword>
<name>CSPLA_PHYPA</name>
<gene>
    <name type="ORF">PHYPADRAFT_73452</name>
</gene>
<reference key="1">
    <citation type="journal article" date="2008" name="Science">
        <title>The Physcomitrella genome reveals evolutionary insights into the conquest of land by plants.</title>
        <authorList>
            <person name="Rensing S.A."/>
            <person name="Lang D."/>
            <person name="Zimmer A.D."/>
            <person name="Terry A."/>
            <person name="Salamov A."/>
            <person name="Shapiro H."/>
            <person name="Nishiyama T."/>
            <person name="Perroud P.-F."/>
            <person name="Lindquist E.A."/>
            <person name="Kamisugi Y."/>
            <person name="Tanahashi T."/>
            <person name="Sakakibara K."/>
            <person name="Fujita T."/>
            <person name="Oishi K."/>
            <person name="Shin-I T."/>
            <person name="Kuroki Y."/>
            <person name="Toyoda A."/>
            <person name="Suzuki Y."/>
            <person name="Hashimoto S.-I."/>
            <person name="Yamaguchi K."/>
            <person name="Sugano S."/>
            <person name="Kohara Y."/>
            <person name="Fujiyama A."/>
            <person name="Anterola A."/>
            <person name="Aoki S."/>
            <person name="Ashton N."/>
            <person name="Barbazuk W.B."/>
            <person name="Barker E."/>
            <person name="Bennetzen J.L."/>
            <person name="Blankenship R."/>
            <person name="Cho S.H."/>
            <person name="Dutcher S.K."/>
            <person name="Estelle M."/>
            <person name="Fawcett J.A."/>
            <person name="Gundlach H."/>
            <person name="Hanada K."/>
            <person name="Heyl A."/>
            <person name="Hicks K.A."/>
            <person name="Hughes J."/>
            <person name="Lohr M."/>
            <person name="Mayer K."/>
            <person name="Melkozernov A."/>
            <person name="Murata T."/>
            <person name="Nelson D.R."/>
            <person name="Pils B."/>
            <person name="Prigge M."/>
            <person name="Reiss B."/>
            <person name="Renner T."/>
            <person name="Rombauts S."/>
            <person name="Rushton P.J."/>
            <person name="Sanderfoot A."/>
            <person name="Schween G."/>
            <person name="Shiu S.-H."/>
            <person name="Stueber K."/>
            <person name="Theodoulou F.L."/>
            <person name="Tu H."/>
            <person name="Van de Peer Y."/>
            <person name="Verrier P.J."/>
            <person name="Waters E."/>
            <person name="Wood A."/>
            <person name="Yang L."/>
            <person name="Cove D."/>
            <person name="Cuming A.C."/>
            <person name="Hasebe M."/>
            <person name="Lucas S."/>
            <person name="Mishler B.D."/>
            <person name="Reski R."/>
            <person name="Grigoriev I.V."/>
            <person name="Quatrano R.S."/>
            <person name="Boore J.L."/>
        </authorList>
    </citation>
    <scope>NUCLEOTIDE SEQUENCE [LARGE SCALE GENOMIC DNA]</scope>
    <source>
        <strain>cv. Gransden 2004</strain>
    </source>
</reference>
<reference key="2">
    <citation type="journal article" date="2014" name="Plant Physiol.">
        <title>Functional and evolutionary analysis of the CASPARIAN STRIP MEMBRANE DOMAIN PROTEIN family.</title>
        <authorList>
            <person name="Roppolo D."/>
            <person name="Boeckmann B."/>
            <person name="Pfister A."/>
            <person name="Boutet E."/>
            <person name="Rubio M.C."/>
            <person name="Denervaud-Tendon V."/>
            <person name="Vermeer J.E."/>
            <person name="Gheyselinck J."/>
            <person name="Xenarios I."/>
            <person name="Geldner N."/>
        </authorList>
    </citation>
    <scope>GENE FAMILY</scope>
    <scope>NOMENCLATURE</scope>
</reference>
<sequence>MSTVAQDSAPGGGKIQDAMEQGAPGASSAAVVPEGGHYTQTPSPAFQAVKKNINHMSAFSLGLRVAEFVLSVIAFSLMASADQNGAVYSTFTSYSFVLAVNVLVVFYTIGQIIMSVLLLVSGSTPKKIYLFITFGCDQLSAFLLMAAGAAGASVALIINRGGVTDAYGNGCIDGKITSFCSHAQASVAFTFLSFFCMVISSLLGVYSLAPYLIL</sequence>
<proteinExistence type="inferred from homology"/>
<accession>A9S1T8</accession>
<comment type="subunit">
    <text evidence="1">Homodimer and heterodimers.</text>
</comment>
<comment type="subcellular location">
    <subcellularLocation>
        <location evidence="1">Cell membrane</location>
        <topology evidence="1">Multi-pass membrane protein</topology>
    </subcellularLocation>
</comment>
<comment type="similarity">
    <text evidence="4">Belongs to the Casparian strip membrane proteins (CASP) family.</text>
</comment>
<evidence type="ECO:0000250" key="1"/>
<evidence type="ECO:0000255" key="2"/>
<evidence type="ECO:0000256" key="3">
    <source>
        <dbReference type="SAM" id="MobiDB-lite"/>
    </source>
</evidence>
<evidence type="ECO:0000305" key="4"/>
<organism>
    <name type="scientific">Physcomitrium patens</name>
    <name type="common">Spreading-leaved earth moss</name>
    <name type="synonym">Physcomitrella patens</name>
    <dbReference type="NCBI Taxonomy" id="3218"/>
    <lineage>
        <taxon>Eukaryota</taxon>
        <taxon>Viridiplantae</taxon>
        <taxon>Streptophyta</taxon>
        <taxon>Embryophyta</taxon>
        <taxon>Bryophyta</taxon>
        <taxon>Bryophytina</taxon>
        <taxon>Bryopsida</taxon>
        <taxon>Funariidae</taxon>
        <taxon>Funariales</taxon>
        <taxon>Funariaceae</taxon>
        <taxon>Physcomitrium</taxon>
    </lineage>
</organism>
<dbReference type="EMBL" id="DS544931">
    <property type="protein sequence ID" value="EDQ74799.1"/>
    <property type="molecule type" value="Genomic_DNA"/>
</dbReference>
<dbReference type="RefSeq" id="XP_001760408.1">
    <property type="nucleotide sequence ID" value="XM_001760356.1"/>
</dbReference>
<dbReference type="SMR" id="A9S1T8"/>
<dbReference type="FunCoup" id="A9S1T8">
    <property type="interactions" value="338"/>
</dbReference>
<dbReference type="PaxDb" id="3218-PP1S42_18V6.1"/>
<dbReference type="EnsemblPlants" id="Pp3c7_9280V3.1">
    <property type="protein sequence ID" value="Pp3c7_9280V3.1"/>
    <property type="gene ID" value="Pp3c7_9280"/>
</dbReference>
<dbReference type="EnsemblPlants" id="Pp3c7_9280V3.2">
    <property type="protein sequence ID" value="Pp3c7_9280V3.2"/>
    <property type="gene ID" value="Pp3c7_9280"/>
</dbReference>
<dbReference type="EnsemblPlants" id="Pp3c7_9280V3.3">
    <property type="protein sequence ID" value="Pp3c7_9280V3.3"/>
    <property type="gene ID" value="Pp3c7_9280"/>
</dbReference>
<dbReference type="Gramene" id="Pp3c7_9280V3.1">
    <property type="protein sequence ID" value="Pp3c7_9280V3.1"/>
    <property type="gene ID" value="Pp3c7_9280"/>
</dbReference>
<dbReference type="Gramene" id="Pp3c7_9280V3.2">
    <property type="protein sequence ID" value="Pp3c7_9280V3.2"/>
    <property type="gene ID" value="Pp3c7_9280"/>
</dbReference>
<dbReference type="Gramene" id="Pp3c7_9280V3.3">
    <property type="protein sequence ID" value="Pp3c7_9280V3.3"/>
    <property type="gene ID" value="Pp3c7_9280"/>
</dbReference>
<dbReference type="eggNOG" id="ENOG502SF1Y">
    <property type="taxonomic scope" value="Eukaryota"/>
</dbReference>
<dbReference type="HOGENOM" id="CLU_1290852_0_0_1"/>
<dbReference type="InParanoid" id="A9S1T8"/>
<dbReference type="OMA" id="FCMVISS"/>
<dbReference type="OrthoDB" id="672180at2759"/>
<dbReference type="Proteomes" id="UP000006727">
    <property type="component" value="Chromosome 7"/>
</dbReference>
<dbReference type="GO" id="GO:0005886">
    <property type="term" value="C:plasma membrane"/>
    <property type="evidence" value="ECO:0007669"/>
    <property type="project" value="UniProtKB-SubCell"/>
</dbReference>
<dbReference type="InterPro" id="IPR006702">
    <property type="entry name" value="CASP_dom"/>
</dbReference>
<dbReference type="PANTHER" id="PTHR33573:SF50">
    <property type="entry name" value="CASP-LIKE PROTEIN 4A3"/>
    <property type="match status" value="1"/>
</dbReference>
<dbReference type="PANTHER" id="PTHR33573">
    <property type="entry name" value="CASP-LIKE PROTEIN 4A4"/>
    <property type="match status" value="1"/>
</dbReference>
<dbReference type="Pfam" id="PF04535">
    <property type="entry name" value="CASP_dom"/>
    <property type="match status" value="1"/>
</dbReference>
<protein>
    <recommendedName>
        <fullName>CASP-like protein UU5</fullName>
        <shortName>PpCASPLUU5</shortName>
    </recommendedName>
</protein>
<feature type="chain" id="PRO_0000391545" description="CASP-like protein UU5">
    <location>
        <begin position="1"/>
        <end position="214"/>
    </location>
</feature>
<feature type="topological domain" description="Cytoplasmic" evidence="2">
    <location>
        <begin position="1"/>
        <end position="57"/>
    </location>
</feature>
<feature type="transmembrane region" description="Helical" evidence="2">
    <location>
        <begin position="58"/>
        <end position="78"/>
    </location>
</feature>
<feature type="topological domain" description="Extracellular" evidence="2">
    <location>
        <begin position="79"/>
        <end position="99"/>
    </location>
</feature>
<feature type="transmembrane region" description="Helical" evidence="2">
    <location>
        <begin position="100"/>
        <end position="120"/>
    </location>
</feature>
<feature type="topological domain" description="Cytoplasmic" evidence="2">
    <location>
        <begin position="121"/>
        <end position="138"/>
    </location>
</feature>
<feature type="transmembrane region" description="Helical" evidence="2">
    <location>
        <begin position="139"/>
        <end position="159"/>
    </location>
</feature>
<feature type="topological domain" description="Extracellular" evidence="2">
    <location>
        <begin position="160"/>
        <end position="193"/>
    </location>
</feature>
<feature type="transmembrane region" description="Helical" evidence="2">
    <location>
        <begin position="194"/>
        <end position="214"/>
    </location>
</feature>
<feature type="region of interest" description="Disordered" evidence="3">
    <location>
        <begin position="1"/>
        <end position="20"/>
    </location>
</feature>